<evidence type="ECO:0000255" key="1">
    <source>
        <dbReference type="HAMAP-Rule" id="MF_01023"/>
    </source>
</evidence>
<proteinExistence type="inferred from homology"/>
<protein>
    <recommendedName>
        <fullName evidence="1">Histidinol-phosphate aminotransferase</fullName>
        <ecNumber evidence="1">2.6.1.9</ecNumber>
    </recommendedName>
    <alternativeName>
        <fullName evidence="1">Imidazole acetol-phosphate transaminase</fullName>
    </alternativeName>
</protein>
<comment type="catalytic activity">
    <reaction evidence="1">
        <text>L-histidinol phosphate + 2-oxoglutarate = 3-(imidazol-4-yl)-2-oxopropyl phosphate + L-glutamate</text>
        <dbReference type="Rhea" id="RHEA:23744"/>
        <dbReference type="ChEBI" id="CHEBI:16810"/>
        <dbReference type="ChEBI" id="CHEBI:29985"/>
        <dbReference type="ChEBI" id="CHEBI:57766"/>
        <dbReference type="ChEBI" id="CHEBI:57980"/>
        <dbReference type="EC" id="2.6.1.9"/>
    </reaction>
</comment>
<comment type="cofactor">
    <cofactor evidence="1">
        <name>pyridoxal 5'-phosphate</name>
        <dbReference type="ChEBI" id="CHEBI:597326"/>
    </cofactor>
</comment>
<comment type="pathway">
    <text evidence="1">Amino-acid biosynthesis; L-histidine biosynthesis; L-histidine from 5-phospho-alpha-D-ribose 1-diphosphate: step 7/9.</text>
</comment>
<comment type="subunit">
    <text evidence="1">Homodimer.</text>
</comment>
<comment type="similarity">
    <text evidence="1">Belongs to the class-II pyridoxal-phosphate-dependent aminotransferase family. Histidinol-phosphate aminotransferase subfamily.</text>
</comment>
<keyword id="KW-0028">Amino-acid biosynthesis</keyword>
<keyword id="KW-0032">Aminotransferase</keyword>
<keyword id="KW-0368">Histidine biosynthesis</keyword>
<keyword id="KW-0663">Pyridoxal phosphate</keyword>
<keyword id="KW-1185">Reference proteome</keyword>
<keyword id="KW-0808">Transferase</keyword>
<sequence>MRFNEVLKDVSTYEAGKPIELVVREYGIDSKDVIKLASNENPYGTSPKVIAKIQELAKNMCLYPDDSMYELKDALAKKYNLESSNIIIGSGSDQILEFCIHAKCKKDSKILMAKTTFAMYEIYGKHVGAEIIKTNSEQHNLEEFSELYKKHGADIIFLCIPNNPLGECLDKNDVYEFLKTIDKNTLVVVDGAYQEYAAFKDEKKRICPKDLIDTFPNAIYLGTFSKAYSLGGMRVGYGFAQNEIIQNLYKIRAPFNITTLSLAAAIEALKDEEFVNDCISKNFEEMKRYEEYVTKKGFEYIPSYTNFITIKFGDKYVSKEVAQKLLERGMIVRDLTSYKQNAIRVTIGKPEQNTKLFQLLDEVLQNL</sequence>
<reference key="1">
    <citation type="journal article" date="2007" name="PLoS ONE">
        <title>The complete genome sequence and analysis of the Epsilonproteobacterium Arcobacter butzleri.</title>
        <authorList>
            <person name="Miller W.G."/>
            <person name="Parker C.T."/>
            <person name="Rubenfield M."/>
            <person name="Mendz G.L."/>
            <person name="Woesten M.M.S.M."/>
            <person name="Ussery D.W."/>
            <person name="Stolz J.F."/>
            <person name="Binnewies T.T."/>
            <person name="Hallin P.F."/>
            <person name="Wang G."/>
            <person name="Malek J.A."/>
            <person name="Rogosin A."/>
            <person name="Stanker L.H."/>
            <person name="Mandrell R.E."/>
        </authorList>
    </citation>
    <scope>NUCLEOTIDE SEQUENCE [LARGE SCALE GENOMIC DNA]</scope>
    <source>
        <strain>RM4018</strain>
    </source>
</reference>
<organism>
    <name type="scientific">Aliarcobacter butzleri (strain RM4018)</name>
    <name type="common">Arcobacter butzleri</name>
    <dbReference type="NCBI Taxonomy" id="367737"/>
    <lineage>
        <taxon>Bacteria</taxon>
        <taxon>Pseudomonadati</taxon>
        <taxon>Campylobacterota</taxon>
        <taxon>Epsilonproteobacteria</taxon>
        <taxon>Campylobacterales</taxon>
        <taxon>Arcobacteraceae</taxon>
        <taxon>Aliarcobacter</taxon>
    </lineage>
</organism>
<accession>A8EWM9</accession>
<dbReference type="EC" id="2.6.1.9" evidence="1"/>
<dbReference type="EMBL" id="CP000361">
    <property type="protein sequence ID" value="ABV68352.1"/>
    <property type="molecule type" value="Genomic_DNA"/>
</dbReference>
<dbReference type="RefSeq" id="WP_012148000.1">
    <property type="nucleotide sequence ID" value="NC_009850.1"/>
</dbReference>
<dbReference type="SMR" id="A8EWM9"/>
<dbReference type="STRING" id="367737.Abu_2138"/>
<dbReference type="GeneID" id="24305312"/>
<dbReference type="KEGG" id="abu:Abu_2138"/>
<dbReference type="eggNOG" id="COG0079">
    <property type="taxonomic scope" value="Bacteria"/>
</dbReference>
<dbReference type="HOGENOM" id="CLU_017584_3_3_7"/>
<dbReference type="UniPathway" id="UPA00031">
    <property type="reaction ID" value="UER00012"/>
</dbReference>
<dbReference type="Proteomes" id="UP000001136">
    <property type="component" value="Chromosome"/>
</dbReference>
<dbReference type="GO" id="GO:0004400">
    <property type="term" value="F:histidinol-phosphate transaminase activity"/>
    <property type="evidence" value="ECO:0007669"/>
    <property type="project" value="UniProtKB-UniRule"/>
</dbReference>
<dbReference type="GO" id="GO:0030170">
    <property type="term" value="F:pyridoxal phosphate binding"/>
    <property type="evidence" value="ECO:0007669"/>
    <property type="project" value="InterPro"/>
</dbReference>
<dbReference type="GO" id="GO:0000105">
    <property type="term" value="P:L-histidine biosynthetic process"/>
    <property type="evidence" value="ECO:0007669"/>
    <property type="project" value="UniProtKB-UniRule"/>
</dbReference>
<dbReference type="CDD" id="cd00609">
    <property type="entry name" value="AAT_like"/>
    <property type="match status" value="1"/>
</dbReference>
<dbReference type="Gene3D" id="3.90.1150.10">
    <property type="entry name" value="Aspartate Aminotransferase, domain 1"/>
    <property type="match status" value="1"/>
</dbReference>
<dbReference type="Gene3D" id="3.40.640.10">
    <property type="entry name" value="Type I PLP-dependent aspartate aminotransferase-like (Major domain)"/>
    <property type="match status" value="1"/>
</dbReference>
<dbReference type="HAMAP" id="MF_01023">
    <property type="entry name" value="HisC_aminotrans_2"/>
    <property type="match status" value="1"/>
</dbReference>
<dbReference type="InterPro" id="IPR001917">
    <property type="entry name" value="Aminotrans_II_pyridoxalP_BS"/>
</dbReference>
<dbReference type="InterPro" id="IPR004839">
    <property type="entry name" value="Aminotransferase_I/II_large"/>
</dbReference>
<dbReference type="InterPro" id="IPR005861">
    <property type="entry name" value="HisP_aminotrans"/>
</dbReference>
<dbReference type="InterPro" id="IPR050106">
    <property type="entry name" value="HistidinolP_aminotransfase"/>
</dbReference>
<dbReference type="InterPro" id="IPR015424">
    <property type="entry name" value="PyrdxlP-dep_Trfase"/>
</dbReference>
<dbReference type="InterPro" id="IPR015421">
    <property type="entry name" value="PyrdxlP-dep_Trfase_major"/>
</dbReference>
<dbReference type="InterPro" id="IPR015422">
    <property type="entry name" value="PyrdxlP-dep_Trfase_small"/>
</dbReference>
<dbReference type="NCBIfam" id="TIGR01141">
    <property type="entry name" value="hisC"/>
    <property type="match status" value="1"/>
</dbReference>
<dbReference type="PANTHER" id="PTHR43643:SF3">
    <property type="entry name" value="HISTIDINOL-PHOSPHATE AMINOTRANSFERASE"/>
    <property type="match status" value="1"/>
</dbReference>
<dbReference type="PANTHER" id="PTHR43643">
    <property type="entry name" value="HISTIDINOL-PHOSPHATE AMINOTRANSFERASE 2"/>
    <property type="match status" value="1"/>
</dbReference>
<dbReference type="Pfam" id="PF00155">
    <property type="entry name" value="Aminotran_1_2"/>
    <property type="match status" value="1"/>
</dbReference>
<dbReference type="SUPFAM" id="SSF53383">
    <property type="entry name" value="PLP-dependent transferases"/>
    <property type="match status" value="1"/>
</dbReference>
<dbReference type="PROSITE" id="PS00599">
    <property type="entry name" value="AA_TRANSFER_CLASS_2"/>
    <property type="match status" value="1"/>
</dbReference>
<gene>
    <name evidence="1" type="primary">hisC</name>
    <name type="ordered locus">Abu_2138</name>
</gene>
<name>HIS8_ALIB4</name>
<feature type="chain" id="PRO_1000063459" description="Histidinol-phosphate aminotransferase">
    <location>
        <begin position="1"/>
        <end position="367"/>
    </location>
</feature>
<feature type="modified residue" description="N6-(pyridoxal phosphate)lysine" evidence="1">
    <location>
        <position position="226"/>
    </location>
</feature>